<comment type="function">
    <text evidence="1">May play a role in DNA repair. It seems to be involved in an RecBC-independent recombinational process of DNA repair. It may act with RecF and RecO.</text>
</comment>
<comment type="similarity">
    <text evidence="1">Belongs to the RecR family.</text>
</comment>
<gene>
    <name evidence="1" type="primary">recR</name>
    <name type="ordered locus">HS_1308</name>
</gene>
<feature type="chain" id="PRO_1000001550" description="Recombination protein RecR">
    <location>
        <begin position="1"/>
        <end position="201"/>
    </location>
</feature>
<feature type="domain" description="Toprim" evidence="1">
    <location>
        <begin position="81"/>
        <end position="176"/>
    </location>
</feature>
<feature type="zinc finger region" description="C4-type" evidence="1">
    <location>
        <begin position="57"/>
        <end position="72"/>
    </location>
</feature>
<sequence length="201" mass="22124">MQSSPLLENLIEHLRCLPGVGPKSAQRMAYHLLQRDRSGGMNLAGALTEAMSKIGHCTHCRTFTEEESCAICNNPRRQNSGFLCVVEQPSDIPAIEQTGQFSGRYFVLMGHLSPLDGIGPKEIGLDLLQKRLQHESFYEVILATNPTVEGEATANYIAEMCFQHNIKVSRIAHGIPIGGELETVDGTTLSHSLIGRREIQL</sequence>
<keyword id="KW-0227">DNA damage</keyword>
<keyword id="KW-0233">DNA recombination</keyword>
<keyword id="KW-0234">DNA repair</keyword>
<keyword id="KW-0479">Metal-binding</keyword>
<keyword id="KW-0862">Zinc</keyword>
<keyword id="KW-0863">Zinc-finger</keyword>
<dbReference type="EMBL" id="CP000436">
    <property type="protein sequence ID" value="ABI25583.1"/>
    <property type="molecule type" value="Genomic_DNA"/>
</dbReference>
<dbReference type="SMR" id="Q0I4S5"/>
<dbReference type="KEGG" id="hso:HS_1308"/>
<dbReference type="eggNOG" id="COG0353">
    <property type="taxonomic scope" value="Bacteria"/>
</dbReference>
<dbReference type="HOGENOM" id="CLU_060739_1_2_6"/>
<dbReference type="GO" id="GO:0003677">
    <property type="term" value="F:DNA binding"/>
    <property type="evidence" value="ECO:0007669"/>
    <property type="project" value="UniProtKB-UniRule"/>
</dbReference>
<dbReference type="GO" id="GO:0008270">
    <property type="term" value="F:zinc ion binding"/>
    <property type="evidence" value="ECO:0007669"/>
    <property type="project" value="UniProtKB-KW"/>
</dbReference>
<dbReference type="GO" id="GO:0006310">
    <property type="term" value="P:DNA recombination"/>
    <property type="evidence" value="ECO:0007669"/>
    <property type="project" value="UniProtKB-UniRule"/>
</dbReference>
<dbReference type="GO" id="GO:0006281">
    <property type="term" value="P:DNA repair"/>
    <property type="evidence" value="ECO:0007669"/>
    <property type="project" value="UniProtKB-UniRule"/>
</dbReference>
<dbReference type="CDD" id="cd01025">
    <property type="entry name" value="TOPRIM_recR"/>
    <property type="match status" value="1"/>
</dbReference>
<dbReference type="FunFam" id="1.10.8.420:FF:000001">
    <property type="entry name" value="Recombination protein RecR"/>
    <property type="match status" value="1"/>
</dbReference>
<dbReference type="FunFam" id="3.40.1360.10:FF:000001">
    <property type="entry name" value="Recombination protein RecR"/>
    <property type="match status" value="1"/>
</dbReference>
<dbReference type="Gene3D" id="3.40.1360.10">
    <property type="match status" value="1"/>
</dbReference>
<dbReference type="Gene3D" id="6.10.250.240">
    <property type="match status" value="1"/>
</dbReference>
<dbReference type="Gene3D" id="1.10.8.420">
    <property type="entry name" value="RecR Domain 1"/>
    <property type="match status" value="1"/>
</dbReference>
<dbReference type="HAMAP" id="MF_00017">
    <property type="entry name" value="RecR"/>
    <property type="match status" value="1"/>
</dbReference>
<dbReference type="InterPro" id="IPR000093">
    <property type="entry name" value="DNA_Rcmb_RecR"/>
</dbReference>
<dbReference type="InterPro" id="IPR023627">
    <property type="entry name" value="Rcmb_RecR"/>
</dbReference>
<dbReference type="InterPro" id="IPR015967">
    <property type="entry name" value="Rcmb_RecR_Znf"/>
</dbReference>
<dbReference type="InterPro" id="IPR006171">
    <property type="entry name" value="TOPRIM_dom"/>
</dbReference>
<dbReference type="InterPro" id="IPR034137">
    <property type="entry name" value="TOPRIM_RecR"/>
</dbReference>
<dbReference type="NCBIfam" id="TIGR00615">
    <property type="entry name" value="recR"/>
    <property type="match status" value="1"/>
</dbReference>
<dbReference type="PANTHER" id="PTHR30446">
    <property type="entry name" value="RECOMBINATION PROTEIN RECR"/>
    <property type="match status" value="1"/>
</dbReference>
<dbReference type="PANTHER" id="PTHR30446:SF0">
    <property type="entry name" value="RECOMBINATION PROTEIN RECR"/>
    <property type="match status" value="1"/>
</dbReference>
<dbReference type="Pfam" id="PF21175">
    <property type="entry name" value="RecR_C"/>
    <property type="match status" value="1"/>
</dbReference>
<dbReference type="Pfam" id="PF21176">
    <property type="entry name" value="RecR_HhH"/>
    <property type="match status" value="1"/>
</dbReference>
<dbReference type="Pfam" id="PF02132">
    <property type="entry name" value="RecR_ZnF"/>
    <property type="match status" value="1"/>
</dbReference>
<dbReference type="Pfam" id="PF13662">
    <property type="entry name" value="Toprim_4"/>
    <property type="match status" value="1"/>
</dbReference>
<dbReference type="SMART" id="SM00493">
    <property type="entry name" value="TOPRIM"/>
    <property type="match status" value="1"/>
</dbReference>
<dbReference type="SUPFAM" id="SSF111304">
    <property type="entry name" value="Recombination protein RecR"/>
    <property type="match status" value="1"/>
</dbReference>
<dbReference type="PROSITE" id="PS01300">
    <property type="entry name" value="RECR"/>
    <property type="match status" value="1"/>
</dbReference>
<dbReference type="PROSITE" id="PS50880">
    <property type="entry name" value="TOPRIM"/>
    <property type="match status" value="1"/>
</dbReference>
<proteinExistence type="inferred from homology"/>
<reference key="1">
    <citation type="journal article" date="2007" name="J. Bacteriol.">
        <title>Complete genome sequence of Haemophilus somnus (Histophilus somni) strain 129Pt and comparison to Haemophilus ducreyi 35000HP and Haemophilus influenzae Rd.</title>
        <authorList>
            <person name="Challacombe J.F."/>
            <person name="Duncan A.J."/>
            <person name="Brettin T.S."/>
            <person name="Bruce D."/>
            <person name="Chertkov O."/>
            <person name="Detter J.C."/>
            <person name="Han C.S."/>
            <person name="Misra M."/>
            <person name="Richardson P."/>
            <person name="Tapia R."/>
            <person name="Thayer N."/>
            <person name="Xie G."/>
            <person name="Inzana T.J."/>
        </authorList>
    </citation>
    <scope>NUCLEOTIDE SEQUENCE [LARGE SCALE GENOMIC DNA]</scope>
    <source>
        <strain>129Pt</strain>
    </source>
</reference>
<organism>
    <name type="scientific">Histophilus somni (strain 129Pt)</name>
    <name type="common">Haemophilus somnus</name>
    <dbReference type="NCBI Taxonomy" id="205914"/>
    <lineage>
        <taxon>Bacteria</taxon>
        <taxon>Pseudomonadati</taxon>
        <taxon>Pseudomonadota</taxon>
        <taxon>Gammaproteobacteria</taxon>
        <taxon>Pasteurellales</taxon>
        <taxon>Pasteurellaceae</taxon>
        <taxon>Histophilus</taxon>
    </lineage>
</organism>
<name>RECR_HISS1</name>
<protein>
    <recommendedName>
        <fullName evidence="1">Recombination protein RecR</fullName>
    </recommendedName>
</protein>
<evidence type="ECO:0000255" key="1">
    <source>
        <dbReference type="HAMAP-Rule" id="MF_00017"/>
    </source>
</evidence>
<accession>Q0I4S5</accession>